<accession>P0C0K2</accession>
<accession>P46188</accession>
<accession>Q601F6</accession>
<sequence>MKKNFILNFATKNVKEKKLSFGVGITLWALIVFAYMIFVMNWGFASAGLNGKAGISGYLGHFFPNANEAPGTVVNQAVNWGITIGRGIGSVLVGWLIVKISHKYTVILSLFFMLFGIIAPYSPTYAGFIILRTIFAIGGTMQIILIQPVVSNYLNQRQKAVISQFSPFFYPIGTIITLIPFAGIIGQEAQKAFRDNWQIVFLVIGLLTLIPLIGYIILGTKFDLYPSNIEKRNKQEKLSLATFFKQKDTWYWTILYGSWLVAVVFPFTFSKPIFHRLIGDSDGTFNDKISVFLIFFLAGMFLGPFTIGLLSKYQLQRRKYISTIITLGVFFYVLATVVFVLKVGKNYEYAKSYTDGWTWLFLFLGLFMGICLWGIQGVMLNLPHEYKGSNPYRVGFQFGLIWGLGYTAFTIATIITSLVNTPPGIDLKKLELNNVDGYALGAYILIIIFSLVSSIGLALLKEPNPEYKKLLKIRSFSEIERIKK</sequence>
<name>Y246_MESH2</name>
<reference key="1">
    <citation type="journal article" date="2004" name="J. Bacteriol.">
        <title>The genome sequence of Mycoplasma hyopneumoniae strain 232, the agent of swine mycoplasmosis.</title>
        <authorList>
            <person name="Minion F.C."/>
            <person name="Lefkowitz E.J."/>
            <person name="Madsen M.L."/>
            <person name="Cleary B.J."/>
            <person name="Swartzell S.M."/>
            <person name="Mahairas G.G."/>
        </authorList>
    </citation>
    <scope>NUCLEOTIDE SEQUENCE [LARGE SCALE GENOMIC DNA]</scope>
    <source>
        <strain>232</strain>
    </source>
</reference>
<feature type="chain" id="PRO_0000066083" description="Uncharacterized protein mhp246">
    <location>
        <begin position="1"/>
        <end position="484"/>
    </location>
</feature>
<feature type="transmembrane region" description="Helical" evidence="1">
    <location>
        <begin position="19"/>
        <end position="39"/>
    </location>
</feature>
<feature type="transmembrane region" description="Helical" evidence="1">
    <location>
        <begin position="78"/>
        <end position="98"/>
    </location>
</feature>
<feature type="transmembrane region" description="Helical" evidence="1">
    <location>
        <begin position="111"/>
        <end position="131"/>
    </location>
</feature>
<feature type="transmembrane region" description="Helical" evidence="1">
    <location>
        <begin position="134"/>
        <end position="154"/>
    </location>
</feature>
<feature type="transmembrane region" description="Helical" evidence="1">
    <location>
        <begin position="165"/>
        <end position="185"/>
    </location>
</feature>
<feature type="transmembrane region" description="Helical" evidence="1">
    <location>
        <begin position="199"/>
        <end position="219"/>
    </location>
</feature>
<feature type="transmembrane region" description="Helical" evidence="1">
    <location>
        <begin position="249"/>
        <end position="269"/>
    </location>
</feature>
<feature type="transmembrane region" description="Helical" evidence="1">
    <location>
        <begin position="289"/>
        <end position="309"/>
    </location>
</feature>
<feature type="transmembrane region" description="Helical" evidence="1">
    <location>
        <begin position="321"/>
        <end position="341"/>
    </location>
</feature>
<feature type="transmembrane region" description="Helical" evidence="1">
    <location>
        <begin position="360"/>
        <end position="380"/>
    </location>
</feature>
<feature type="transmembrane region" description="Helical" evidence="1">
    <location>
        <begin position="398"/>
        <end position="418"/>
    </location>
</feature>
<feature type="transmembrane region" description="Helical" evidence="1">
    <location>
        <begin position="440"/>
        <end position="460"/>
    </location>
</feature>
<protein>
    <recommendedName>
        <fullName>Uncharacterized protein mhp246</fullName>
    </recommendedName>
</protein>
<dbReference type="EMBL" id="AE017332">
    <property type="protein sequence ID" value="AAV27787.1"/>
    <property type="molecule type" value="Genomic_DNA"/>
</dbReference>
<dbReference type="RefSeq" id="WP_011206083.1">
    <property type="nucleotide sequence ID" value="NC_006360.1"/>
</dbReference>
<dbReference type="TCDB" id="2.A.1.76.1">
    <property type="family name" value="the major facilitator superfamily (mfs)"/>
</dbReference>
<dbReference type="KEGG" id="mhy:mhp246"/>
<dbReference type="eggNOG" id="COG2814">
    <property type="taxonomic scope" value="Bacteria"/>
</dbReference>
<dbReference type="HOGENOM" id="CLU_033053_0_0_14"/>
<dbReference type="PhylomeDB" id="P0C0K2"/>
<dbReference type="Proteomes" id="UP000006822">
    <property type="component" value="Chromosome"/>
</dbReference>
<dbReference type="GO" id="GO:0005886">
    <property type="term" value="C:plasma membrane"/>
    <property type="evidence" value="ECO:0007669"/>
    <property type="project" value="UniProtKB-SubCell"/>
</dbReference>
<dbReference type="GO" id="GO:0046943">
    <property type="term" value="F:carboxylic acid transmembrane transporter activity"/>
    <property type="evidence" value="ECO:0007669"/>
    <property type="project" value="TreeGrafter"/>
</dbReference>
<dbReference type="CDD" id="cd06174">
    <property type="entry name" value="MFS"/>
    <property type="match status" value="1"/>
</dbReference>
<dbReference type="Gene3D" id="1.20.1250.20">
    <property type="entry name" value="MFS general substrate transporter like domains"/>
    <property type="match status" value="2"/>
</dbReference>
<dbReference type="InterPro" id="IPR054938">
    <property type="entry name" value="Hexose_phos_transporter"/>
</dbReference>
<dbReference type="InterPro" id="IPR011699">
    <property type="entry name" value="MFS_Mycoplasma"/>
</dbReference>
<dbReference type="InterPro" id="IPR036259">
    <property type="entry name" value="MFS_trans_sf"/>
</dbReference>
<dbReference type="NCBIfam" id="NF043062">
    <property type="entry name" value="MMSYN1_0881"/>
    <property type="match status" value="1"/>
</dbReference>
<dbReference type="PANTHER" id="PTHR23508">
    <property type="entry name" value="CARBOXYLIC ACID TRANSPORTER PROTEIN HOMOLOG"/>
    <property type="match status" value="1"/>
</dbReference>
<dbReference type="PANTHER" id="PTHR23508:SF10">
    <property type="entry name" value="CARBOXYLIC ACID TRANSPORTER PROTEIN HOMOLOG"/>
    <property type="match status" value="1"/>
</dbReference>
<dbReference type="Pfam" id="PF07672">
    <property type="entry name" value="MFS_Mycoplasma"/>
    <property type="match status" value="1"/>
</dbReference>
<dbReference type="SUPFAM" id="SSF103473">
    <property type="entry name" value="MFS general substrate transporter"/>
    <property type="match status" value="1"/>
</dbReference>
<organism>
    <name type="scientific">Mesomycoplasma hyopneumoniae (strain 232)</name>
    <name type="common">Mycoplasma hyopneumoniae</name>
    <dbReference type="NCBI Taxonomy" id="295358"/>
    <lineage>
        <taxon>Bacteria</taxon>
        <taxon>Bacillati</taxon>
        <taxon>Mycoplasmatota</taxon>
        <taxon>Mycoplasmoidales</taxon>
        <taxon>Metamycoplasmataceae</taxon>
        <taxon>Mesomycoplasma</taxon>
    </lineage>
</organism>
<comment type="subcellular location">
    <subcellularLocation>
        <location evidence="2">Cell membrane</location>
        <topology evidence="2">Multi-pass membrane protein</topology>
    </subcellularLocation>
</comment>
<proteinExistence type="predicted"/>
<gene>
    <name type="ordered locus">mhp246</name>
</gene>
<evidence type="ECO:0000255" key="1"/>
<evidence type="ECO:0000305" key="2"/>
<keyword id="KW-1003">Cell membrane</keyword>
<keyword id="KW-0472">Membrane</keyword>
<keyword id="KW-0812">Transmembrane</keyword>
<keyword id="KW-1133">Transmembrane helix</keyword>